<evidence type="ECO:0000250" key="1">
    <source>
        <dbReference type="UniProtKB" id="Q9CR88"/>
    </source>
</evidence>
<evidence type="ECO:0000269" key="2">
    <source>
    </source>
</evidence>
<evidence type="ECO:0000269" key="3">
    <source>
    </source>
</evidence>
<evidence type="ECO:0000305" key="4"/>
<evidence type="ECO:0007744" key="5">
    <source>
        <dbReference type="PDB" id="3JD5"/>
    </source>
</evidence>
<evidence type="ECO:0007829" key="6">
    <source>
        <dbReference type="PDB" id="6NEQ"/>
    </source>
</evidence>
<evidence type="ECO:0007829" key="7">
    <source>
        <dbReference type="PDB" id="6NF8"/>
    </source>
</evidence>
<protein>
    <recommendedName>
        <fullName evidence="4">Small ribosomal subunit protein uS14m</fullName>
    </recommendedName>
    <alternativeName>
        <fullName>28S ribosomal protein S14, mitochondrial</fullName>
        <shortName>MRP-S14</shortName>
        <shortName>S14mt</shortName>
    </alternativeName>
</protein>
<organism>
    <name type="scientific">Bos taurus</name>
    <name type="common">Bovine</name>
    <dbReference type="NCBI Taxonomy" id="9913"/>
    <lineage>
        <taxon>Eukaryota</taxon>
        <taxon>Metazoa</taxon>
        <taxon>Chordata</taxon>
        <taxon>Craniata</taxon>
        <taxon>Vertebrata</taxon>
        <taxon>Euteleostomi</taxon>
        <taxon>Mammalia</taxon>
        <taxon>Eutheria</taxon>
        <taxon>Laurasiatheria</taxon>
        <taxon>Artiodactyla</taxon>
        <taxon>Ruminantia</taxon>
        <taxon>Pecora</taxon>
        <taxon>Bovidae</taxon>
        <taxon>Bovinae</taxon>
        <taxon>Bos</taxon>
    </lineage>
</organism>
<keyword id="KW-0002">3D-structure</keyword>
<keyword id="KW-0903">Direct protein sequencing</keyword>
<keyword id="KW-0496">Mitochondrion</keyword>
<keyword id="KW-1185">Reference proteome</keyword>
<keyword id="KW-0687">Ribonucleoprotein</keyword>
<keyword id="KW-0689">Ribosomal protein</keyword>
<reference key="1">
    <citation type="submission" date="2004-07" db="EMBL/GenBank/DDBJ databases">
        <title>Differentially expressed genes in bovine GV oocyte.</title>
        <authorList>
            <person name="Hwang K.C."/>
            <person name="Park S.Y."/>
            <person name="Cui X.S."/>
            <person name="Kim N.H."/>
        </authorList>
    </citation>
    <scope>NUCLEOTIDE SEQUENCE [MRNA]</scope>
</reference>
<reference key="2">
    <citation type="submission" date="2005-10" db="EMBL/GenBank/DDBJ databases">
        <authorList>
            <consortium name="NIH - Mammalian Gene Collection (MGC) project"/>
        </authorList>
    </citation>
    <scope>NUCLEOTIDE SEQUENCE [LARGE SCALE MRNA]</scope>
    <source>
        <strain>Crossbred X Angus</strain>
        <tissue>Liver</tissue>
    </source>
</reference>
<reference key="3">
    <citation type="journal article" date="2000" name="J. Biol. Chem.">
        <title>A proteomics approach to the identification of mammalian mitochondrial small subunit ribosomal proteins.</title>
        <authorList>
            <person name="Koc E.C."/>
            <person name="Burkhart W."/>
            <person name="Blackburn K."/>
            <person name="Moseley A."/>
            <person name="Koc H."/>
            <person name="Spremulli L.L."/>
        </authorList>
    </citation>
    <scope>PROTEIN SEQUENCE OF 66-80</scope>
    <scope>SUBUNIT</scope>
    <scope>SUBCELLULAR LOCATION</scope>
    <source>
        <tissue>Liver</tissue>
    </source>
</reference>
<reference evidence="5" key="4">
    <citation type="journal article" date="2014" name="Proc. Natl. Acad. Sci. U.S.A.">
        <title>Cryo-EM structure of the small subunit of the mammalian mitochondrial ribosome.</title>
        <authorList>
            <person name="Kaushal P.S."/>
            <person name="Sharma M.R."/>
            <person name="Booth T.M."/>
            <person name="Haque E.M."/>
            <person name="Tung C.S."/>
            <person name="Sanbonmatsu K.Y."/>
            <person name="Spremulli L.L."/>
            <person name="Agrawal R.K."/>
        </authorList>
    </citation>
    <scope>STRUCTURE BY ELECTRON MICROSCOPY (7.00 ANGSTROMS)</scope>
    <scope>SUBUNIT</scope>
    <scope>SUBCELLULAR LOCATION</scope>
</reference>
<name>RT14_BOVIN</name>
<dbReference type="EMBL" id="AY675077">
    <property type="protein sequence ID" value="AAT84370.1"/>
    <property type="molecule type" value="mRNA"/>
</dbReference>
<dbReference type="EMBL" id="BC108164">
    <property type="protein sequence ID" value="AAI08165.1"/>
    <property type="molecule type" value="mRNA"/>
</dbReference>
<dbReference type="RefSeq" id="NP_001003902.1">
    <property type="nucleotide sequence ID" value="NM_001003902.1"/>
</dbReference>
<dbReference type="PDB" id="3JD5">
    <property type="method" value="EM"/>
    <property type="resolution" value="7.00 A"/>
    <property type="chains" value="N=1-128"/>
</dbReference>
<dbReference type="PDB" id="6NEQ">
    <property type="method" value="EM"/>
    <property type="resolution" value="3.32 A"/>
    <property type="chains" value="N=1-128"/>
</dbReference>
<dbReference type="PDB" id="6NF8">
    <property type="method" value="EM"/>
    <property type="resolution" value="3.48 A"/>
    <property type="chains" value="N=1-128"/>
</dbReference>
<dbReference type="PDBsum" id="3JD5"/>
<dbReference type="PDBsum" id="6NEQ"/>
<dbReference type="PDBsum" id="6NF8"/>
<dbReference type="EMDB" id="EMD-9358"/>
<dbReference type="EMDB" id="EMD-9362"/>
<dbReference type="SMR" id="Q6B860"/>
<dbReference type="CORUM" id="Q6B860"/>
<dbReference type="FunCoup" id="Q6B860">
    <property type="interactions" value="2232"/>
</dbReference>
<dbReference type="IntAct" id="Q6B860">
    <property type="interactions" value="1"/>
</dbReference>
<dbReference type="STRING" id="9913.ENSBTAP00000001465"/>
<dbReference type="PaxDb" id="9913-ENSBTAP00000001465"/>
<dbReference type="GeneID" id="445421"/>
<dbReference type="KEGG" id="bta:445421"/>
<dbReference type="CTD" id="63931"/>
<dbReference type="VEuPathDB" id="HostDB:ENSBTAG00000001109"/>
<dbReference type="eggNOG" id="KOG1741">
    <property type="taxonomic scope" value="Eukaryota"/>
</dbReference>
<dbReference type="HOGENOM" id="CLU_139869_1_0_1"/>
<dbReference type="InParanoid" id="Q6B860"/>
<dbReference type="OMA" id="FGLCRNQ"/>
<dbReference type="OrthoDB" id="413436at2759"/>
<dbReference type="TreeFam" id="TF320418"/>
<dbReference type="Reactome" id="R-BTA-5389840">
    <property type="pathway name" value="Mitochondrial translation elongation"/>
</dbReference>
<dbReference type="Reactome" id="R-BTA-5419276">
    <property type="pathway name" value="Mitochondrial translation termination"/>
</dbReference>
<dbReference type="Proteomes" id="UP000009136">
    <property type="component" value="Chromosome 16"/>
</dbReference>
<dbReference type="Bgee" id="ENSBTAG00000001109">
    <property type="expression patterns" value="Expressed in oocyte and 104 other cell types or tissues"/>
</dbReference>
<dbReference type="GO" id="GO:0005743">
    <property type="term" value="C:mitochondrial inner membrane"/>
    <property type="evidence" value="ECO:0000304"/>
    <property type="project" value="Reactome"/>
</dbReference>
<dbReference type="GO" id="GO:0005763">
    <property type="term" value="C:mitochondrial small ribosomal subunit"/>
    <property type="evidence" value="ECO:0007005"/>
    <property type="project" value="UniProtKB"/>
</dbReference>
<dbReference type="GO" id="GO:0003735">
    <property type="term" value="F:structural constituent of ribosome"/>
    <property type="evidence" value="ECO:0007005"/>
    <property type="project" value="UniProtKB"/>
</dbReference>
<dbReference type="GO" id="GO:0032543">
    <property type="term" value="P:mitochondrial translation"/>
    <property type="evidence" value="ECO:0007005"/>
    <property type="project" value="UniProtKB"/>
</dbReference>
<dbReference type="GO" id="GO:0006412">
    <property type="term" value="P:translation"/>
    <property type="evidence" value="ECO:0000318"/>
    <property type="project" value="GO_Central"/>
</dbReference>
<dbReference type="FunFam" id="1.10.287.1480:FF:000001">
    <property type="entry name" value="30S ribosomal protein S14"/>
    <property type="match status" value="1"/>
</dbReference>
<dbReference type="Gene3D" id="1.10.287.1480">
    <property type="match status" value="1"/>
</dbReference>
<dbReference type="InterPro" id="IPR001209">
    <property type="entry name" value="Ribosomal_uS14"/>
</dbReference>
<dbReference type="NCBIfam" id="NF006477">
    <property type="entry name" value="PRK08881.1"/>
    <property type="match status" value="1"/>
</dbReference>
<dbReference type="PANTHER" id="PTHR19836">
    <property type="entry name" value="30S RIBOSOMAL PROTEIN S14"/>
    <property type="match status" value="1"/>
</dbReference>
<dbReference type="PANTHER" id="PTHR19836:SF19">
    <property type="entry name" value="SMALL RIBOSOMAL SUBUNIT PROTEIN US14M"/>
    <property type="match status" value="1"/>
</dbReference>
<dbReference type="Pfam" id="PF00253">
    <property type="entry name" value="Ribosomal_S14"/>
    <property type="match status" value="1"/>
</dbReference>
<dbReference type="SUPFAM" id="SSF57716">
    <property type="entry name" value="Glucocorticoid receptor-like (DNA-binding domain)"/>
    <property type="match status" value="1"/>
</dbReference>
<proteinExistence type="evidence at protein level"/>
<accession>Q6B860</accession>
<accession>P82665</accession>
<accession>Q32PD1</accession>
<comment type="subunit">
    <text evidence="1 2 3">Component of the mitochondrial ribosome small subunit (28S) which comprises a 12S rRNA and about 30 distinct proteins (PubMed:10938081, PubMed:24799711). Interacts with LIAT1 (By similarity).</text>
</comment>
<comment type="subcellular location">
    <subcellularLocation>
        <location evidence="2 3">Mitochondrion</location>
    </subcellularLocation>
</comment>
<comment type="similarity">
    <text evidence="4">Belongs to the universal ribosomal protein uS14 family.</text>
</comment>
<gene>
    <name type="primary">MRPS14</name>
</gene>
<feature type="chain" id="PRO_0000131012" description="Small ribosomal subunit protein uS14m">
    <location>
        <begin position="1"/>
        <end position="128"/>
    </location>
</feature>
<feature type="sequence conflict" description="In Ref. 3; AA sequence." evidence="4" ref="3">
    <original>Q</original>
    <variation>E</variation>
    <location>
        <position position="68"/>
    </location>
</feature>
<feature type="helix" evidence="6">
    <location>
        <begin position="32"/>
        <end position="58"/>
    </location>
</feature>
<feature type="strand" evidence="6">
    <location>
        <begin position="61"/>
        <end position="63"/>
    </location>
</feature>
<feature type="helix" evidence="6">
    <location>
        <begin position="65"/>
        <end position="77"/>
    </location>
</feature>
<feature type="turn" evidence="7">
    <location>
        <begin position="80"/>
        <end position="82"/>
    </location>
</feature>
<feature type="helix" evidence="6">
    <location>
        <begin position="84"/>
        <end position="86"/>
    </location>
</feature>
<feature type="strand" evidence="6">
    <location>
        <begin position="92"/>
        <end position="94"/>
    </location>
</feature>
<feature type="strand" evidence="6">
    <location>
        <begin position="97"/>
        <end position="100"/>
    </location>
</feature>
<feature type="turn" evidence="6">
    <location>
        <begin position="102"/>
        <end position="104"/>
    </location>
</feature>
<feature type="helix" evidence="6">
    <location>
        <begin position="108"/>
        <end position="115"/>
    </location>
</feature>
<feature type="turn" evidence="6">
    <location>
        <begin position="116"/>
        <end position="118"/>
    </location>
</feature>
<feature type="strand" evidence="7">
    <location>
        <begin position="120"/>
        <end position="122"/>
    </location>
</feature>
<sequence>MATSMLGSLLRIVRQVVPSSASGQARSYYVDWRMLRDVKRRKMAYEYADERLRINSLRKNTILPKHLQEVADEEIAALPRDSCPVRIRNRCVMTSRPRGVKRRWRLSRIVFRHLADHGQLSGIQRAIW</sequence>